<accession>C4K730</accession>
<name>LPXC_HAMD5</name>
<proteinExistence type="inferred from homology"/>
<reference key="1">
    <citation type="journal article" date="2009" name="Proc. Natl. Acad. Sci. U.S.A.">
        <title>Hamiltonella defensa, genome evolution of protective bacterial endosymbiont from pathogenic ancestors.</title>
        <authorList>
            <person name="Degnan P.H."/>
            <person name="Yu Y."/>
            <person name="Sisneros N."/>
            <person name="Wing R.A."/>
            <person name="Moran N.A."/>
        </authorList>
    </citation>
    <scope>NUCLEOTIDE SEQUENCE [LARGE SCALE GENOMIC DNA]</scope>
    <source>
        <strain>5AT</strain>
    </source>
</reference>
<comment type="function">
    <text evidence="1">Catalyzes the hydrolysis of UDP-3-O-myristoyl-N-acetylglucosamine to form UDP-3-O-myristoylglucosamine and acetate, the committed step in lipid A biosynthesis.</text>
</comment>
<comment type="catalytic activity">
    <reaction evidence="1">
        <text>a UDP-3-O-[(3R)-3-hydroxyacyl]-N-acetyl-alpha-D-glucosamine + H2O = a UDP-3-O-[(3R)-3-hydroxyacyl]-alpha-D-glucosamine + acetate</text>
        <dbReference type="Rhea" id="RHEA:67816"/>
        <dbReference type="ChEBI" id="CHEBI:15377"/>
        <dbReference type="ChEBI" id="CHEBI:30089"/>
        <dbReference type="ChEBI" id="CHEBI:137740"/>
        <dbReference type="ChEBI" id="CHEBI:173225"/>
        <dbReference type="EC" id="3.5.1.108"/>
    </reaction>
</comment>
<comment type="cofactor">
    <cofactor evidence="1">
        <name>Zn(2+)</name>
        <dbReference type="ChEBI" id="CHEBI:29105"/>
    </cofactor>
</comment>
<comment type="pathway">
    <text evidence="1">Glycolipid biosynthesis; lipid IV(A) biosynthesis; lipid IV(A) from (3R)-3-hydroxytetradecanoyl-[acyl-carrier-protein] and UDP-N-acetyl-alpha-D-glucosamine: step 2/6.</text>
</comment>
<comment type="similarity">
    <text evidence="1">Belongs to the LpxC family.</text>
</comment>
<keyword id="KW-0378">Hydrolase</keyword>
<keyword id="KW-0441">Lipid A biosynthesis</keyword>
<keyword id="KW-0444">Lipid biosynthesis</keyword>
<keyword id="KW-0443">Lipid metabolism</keyword>
<keyword id="KW-0479">Metal-binding</keyword>
<keyword id="KW-0862">Zinc</keyword>
<gene>
    <name evidence="1" type="primary">lpxC</name>
    <name type="ordered locus">HDEF_1777</name>
</gene>
<protein>
    <recommendedName>
        <fullName evidence="1">UDP-3-O-acyl-N-acetylglucosamine deacetylase</fullName>
        <shortName evidence="1">UDP-3-O-acyl-GlcNAc deacetylase</shortName>
        <ecNumber evidence="1">3.5.1.108</ecNumber>
    </recommendedName>
    <alternativeName>
        <fullName evidence="1">UDP-3-O-[R-3-hydroxymyristoyl]-N-acetylglucosamine deacetylase</fullName>
    </alternativeName>
</protein>
<dbReference type="EC" id="3.5.1.108" evidence="1"/>
<dbReference type="EMBL" id="CP001277">
    <property type="protein sequence ID" value="ACQ68373.1"/>
    <property type="molecule type" value="Genomic_DNA"/>
</dbReference>
<dbReference type="RefSeq" id="WP_015874137.1">
    <property type="nucleotide sequence ID" value="NC_012751.1"/>
</dbReference>
<dbReference type="SMR" id="C4K730"/>
<dbReference type="STRING" id="572265.HDEF_1777"/>
<dbReference type="GeneID" id="66261368"/>
<dbReference type="KEGG" id="hde:HDEF_1777"/>
<dbReference type="eggNOG" id="COG0774">
    <property type="taxonomic scope" value="Bacteria"/>
</dbReference>
<dbReference type="HOGENOM" id="CLU_046528_1_0_6"/>
<dbReference type="UniPathway" id="UPA00359">
    <property type="reaction ID" value="UER00478"/>
</dbReference>
<dbReference type="Proteomes" id="UP000002334">
    <property type="component" value="Chromosome"/>
</dbReference>
<dbReference type="GO" id="GO:0016020">
    <property type="term" value="C:membrane"/>
    <property type="evidence" value="ECO:0007669"/>
    <property type="project" value="GOC"/>
</dbReference>
<dbReference type="GO" id="GO:0046872">
    <property type="term" value="F:metal ion binding"/>
    <property type="evidence" value="ECO:0007669"/>
    <property type="project" value="UniProtKB-KW"/>
</dbReference>
<dbReference type="GO" id="GO:0103117">
    <property type="term" value="F:UDP-3-O-acyl-N-acetylglucosamine deacetylase activity"/>
    <property type="evidence" value="ECO:0007669"/>
    <property type="project" value="UniProtKB-UniRule"/>
</dbReference>
<dbReference type="GO" id="GO:0009245">
    <property type="term" value="P:lipid A biosynthetic process"/>
    <property type="evidence" value="ECO:0007669"/>
    <property type="project" value="UniProtKB-UniRule"/>
</dbReference>
<dbReference type="Gene3D" id="3.30.230.20">
    <property type="entry name" value="lpxc deacetylase, domain 1"/>
    <property type="match status" value="1"/>
</dbReference>
<dbReference type="Gene3D" id="3.30.1700.10">
    <property type="entry name" value="lpxc deacetylase, domain 2"/>
    <property type="match status" value="1"/>
</dbReference>
<dbReference type="HAMAP" id="MF_00388">
    <property type="entry name" value="LpxC"/>
    <property type="match status" value="1"/>
</dbReference>
<dbReference type="InterPro" id="IPR020568">
    <property type="entry name" value="Ribosomal_Su5_D2-typ_SF"/>
</dbReference>
<dbReference type="InterPro" id="IPR004463">
    <property type="entry name" value="UDP-acyl_GlcNac_deAcase"/>
</dbReference>
<dbReference type="InterPro" id="IPR011334">
    <property type="entry name" value="UDP-acyl_GlcNac_deAcase_C"/>
</dbReference>
<dbReference type="InterPro" id="IPR015870">
    <property type="entry name" value="UDP-acyl_N-AcGlcN_deAcase_N"/>
</dbReference>
<dbReference type="NCBIfam" id="TIGR00325">
    <property type="entry name" value="lpxC"/>
    <property type="match status" value="1"/>
</dbReference>
<dbReference type="PANTHER" id="PTHR33694">
    <property type="entry name" value="UDP-3-O-ACYL-N-ACETYLGLUCOSAMINE DEACETYLASE 1, MITOCHONDRIAL-RELATED"/>
    <property type="match status" value="1"/>
</dbReference>
<dbReference type="PANTHER" id="PTHR33694:SF1">
    <property type="entry name" value="UDP-3-O-ACYL-N-ACETYLGLUCOSAMINE DEACETYLASE 1, MITOCHONDRIAL-RELATED"/>
    <property type="match status" value="1"/>
</dbReference>
<dbReference type="Pfam" id="PF03331">
    <property type="entry name" value="LpxC"/>
    <property type="match status" value="1"/>
</dbReference>
<dbReference type="SUPFAM" id="SSF54211">
    <property type="entry name" value="Ribosomal protein S5 domain 2-like"/>
    <property type="match status" value="2"/>
</dbReference>
<evidence type="ECO:0000255" key="1">
    <source>
        <dbReference type="HAMAP-Rule" id="MF_00388"/>
    </source>
</evidence>
<organism>
    <name type="scientific">Hamiltonella defensa subsp. Acyrthosiphon pisum (strain 5AT)</name>
    <dbReference type="NCBI Taxonomy" id="572265"/>
    <lineage>
        <taxon>Bacteria</taxon>
        <taxon>Pseudomonadati</taxon>
        <taxon>Pseudomonadota</taxon>
        <taxon>Gammaproteobacteria</taxon>
        <taxon>Enterobacterales</taxon>
        <taxon>Enterobacteriaceae</taxon>
        <taxon>aphid secondary symbionts</taxon>
        <taxon>Candidatus Hamiltonella</taxon>
    </lineage>
</organism>
<feature type="chain" id="PRO_1000205806" description="UDP-3-O-acyl-N-acetylglucosamine deacetylase">
    <location>
        <begin position="1"/>
        <end position="306"/>
    </location>
</feature>
<feature type="active site" description="Proton donor" evidence="1">
    <location>
        <position position="265"/>
    </location>
</feature>
<feature type="binding site" evidence="1">
    <location>
        <position position="79"/>
    </location>
    <ligand>
        <name>Zn(2+)</name>
        <dbReference type="ChEBI" id="CHEBI:29105"/>
    </ligand>
</feature>
<feature type="binding site" evidence="1">
    <location>
        <position position="238"/>
    </location>
    <ligand>
        <name>Zn(2+)</name>
        <dbReference type="ChEBI" id="CHEBI:29105"/>
    </ligand>
</feature>
<feature type="binding site" evidence="1">
    <location>
        <position position="242"/>
    </location>
    <ligand>
        <name>Zn(2+)</name>
        <dbReference type="ChEBI" id="CHEBI:29105"/>
    </ligand>
</feature>
<sequence length="306" mass="34501">MIKQKTLKHVVKTTGVGLHTGKKVTLTMRPASANDGIIYRRVDLNPVVEFFADPESVRDTQLCTCLVNENNIRISTIEHLNSALAAFGIDNVIIEVDAPEVPIMDGSASPFIFLLLNSGIKELNAPKKFLKLKETIRVQKDDKWAELSPYDGFRLDFSIDFKHPAIHENTQSYGFDFSAQTFILELSRARTFGFIKDIEYLQSKGLCLGGSFDCAIVMDDYRVLNEDGLRFEDEFVRHKMLDAIGDLFICGHNIIGAFSAFKSGHALNNQLLKAVLENQSAWEYVTFEHEEAPILFGHSLEMCFVR</sequence>